<comment type="function">
    <text evidence="4">Histone demethylase that demethylates 'Arg-3' (H4R3me) of histone H4 with a specific activity for H4R3me2 (PubMed:22483719). Involved in the positive regulation of gene expression (PubMed:22483719). Together with JMJ22, positively regulates seed germination by promoting the removal of repressive histone arginine methylations (e.g. H4R3me2) at GA3ox1 and GA3ox2 to trigger gibberellic acid (GA) biosynthesis (PubMed:22483719).</text>
</comment>
<comment type="catalytic activity">
    <reaction evidence="4">
        <text>N(omega),N(omega)-dimethyl-L-arginyl-[protein] + 2-oxoglutarate + O2 = N(omega)-methyl-L-arginyl-[protein] + formaldehyde + succinate + CO2</text>
        <dbReference type="Rhea" id="RHEA:58352"/>
        <dbReference type="Rhea" id="RHEA-COMP:11990"/>
        <dbReference type="Rhea" id="RHEA-COMP:11991"/>
        <dbReference type="ChEBI" id="CHEBI:15379"/>
        <dbReference type="ChEBI" id="CHEBI:16526"/>
        <dbReference type="ChEBI" id="CHEBI:16810"/>
        <dbReference type="ChEBI" id="CHEBI:16842"/>
        <dbReference type="ChEBI" id="CHEBI:30031"/>
        <dbReference type="ChEBI" id="CHEBI:61897"/>
        <dbReference type="ChEBI" id="CHEBI:65280"/>
    </reaction>
    <physiologicalReaction direction="left-to-right" evidence="4">
        <dbReference type="Rhea" id="RHEA:58353"/>
    </physiologicalReaction>
</comment>
<comment type="cofactor">
    <cofactor evidence="1">
        <name>Fe(2+)</name>
        <dbReference type="ChEBI" id="CHEBI:29033"/>
    </cofactor>
    <text evidence="1">Binds 1 Fe(2+) ion per subunit.</text>
</comment>
<comment type="subcellular location">
    <subcellularLocation>
        <location evidence="4">Nucleus</location>
    </subcellularLocation>
</comment>
<comment type="tissue specificity">
    <text evidence="3">Mostly expressed in leaves, and, to a lower extent, in inflorescences, roots, siliques and stems.</text>
</comment>
<comment type="developmental stage">
    <text evidence="4">In far-red light (FR)-treated seeds, present in the whole embryo (PubMed:22483719). Accumulates upon red light (R) (PubMed:22483719).</text>
</comment>
<comment type="induction">
    <text evidence="4">Repressed by the zinc-finger protein SOMNUS when PHYB is inactive in far-red (FR) conditions, but derepressed upon PHYB activation by red light (R).</text>
</comment>
<comment type="disruption phenotype">
    <text evidence="4">Plants missing both JMJ20 and JMJ22 exhibit reduced seed germination efficiency during PHYB activation after red light (R)-pulse treatment due to an impaired H4R3me2 removal-dependent derepression of GA3ox1 and GA3ox2 causing lower endogenous gibberellic acid (GA) biosynthesis.</text>
</comment>
<comment type="similarity">
    <text evidence="6">Belongs to the JARID1 histone demethylase family.</text>
</comment>
<comment type="sequence caution" evidence="6">
    <conflict type="erroneous gene model prediction">
        <sequence resource="EMBL-CDS" id="BAB10550"/>
    </conflict>
</comment>
<protein>
    <recommendedName>
        <fullName evidence="5">Arginine-specific demethylase JMJ20</fullName>
        <ecNumber evidence="4">1.14.11.-</ecNumber>
    </recommendedName>
    <alternativeName>
        <fullName evidence="5">Arginine-specific histone demethylase JMJ20</fullName>
    </alternativeName>
    <alternativeName>
        <fullName evidence="5">Jumonji domain-containing protein 20</fullName>
        <shortName evidence="5">AtJMJ20</shortName>
        <shortName evidence="5">Protein JUMONJI 20</shortName>
    </alternativeName>
    <alternativeName>
        <fullName evidence="6">[histone H4]-dimethyl-L-arginine(3) monodemethylase JMJ20</fullName>
    </alternativeName>
</protein>
<feature type="chain" id="PRO_0000456190" description="Arginine-specific demethylase JMJ20">
    <location>
        <begin position="1"/>
        <end position="462"/>
    </location>
</feature>
<feature type="domain" description="JmjC" evidence="2">
    <location>
        <begin position="115"/>
        <end position="287"/>
    </location>
</feature>
<feature type="binding site" evidence="2">
    <location>
        <position position="177"/>
    </location>
    <ligand>
        <name>Fe cation</name>
        <dbReference type="ChEBI" id="CHEBI:24875"/>
        <note>catalytic</note>
    </ligand>
</feature>
<feature type="binding site" evidence="2">
    <location>
        <position position="179"/>
    </location>
    <ligand>
        <name>Fe cation</name>
        <dbReference type="ChEBI" id="CHEBI:24875"/>
        <note>catalytic</note>
    </ligand>
</feature>
<feature type="binding site" evidence="2">
    <location>
        <position position="255"/>
    </location>
    <ligand>
        <name>Fe cation</name>
        <dbReference type="ChEBI" id="CHEBI:24875"/>
        <note>catalytic</note>
    </ligand>
</feature>
<organism>
    <name type="scientific">Arabidopsis thaliana</name>
    <name type="common">Mouse-ear cress</name>
    <dbReference type="NCBI Taxonomy" id="3702"/>
    <lineage>
        <taxon>Eukaryota</taxon>
        <taxon>Viridiplantae</taxon>
        <taxon>Streptophyta</taxon>
        <taxon>Embryophyta</taxon>
        <taxon>Tracheophyta</taxon>
        <taxon>Spermatophyta</taxon>
        <taxon>Magnoliopsida</taxon>
        <taxon>eudicotyledons</taxon>
        <taxon>Gunneridae</taxon>
        <taxon>Pentapetalae</taxon>
        <taxon>rosids</taxon>
        <taxon>malvids</taxon>
        <taxon>Brassicales</taxon>
        <taxon>Brassicaceae</taxon>
        <taxon>Camelineae</taxon>
        <taxon>Arabidopsis</taxon>
    </lineage>
</organism>
<sequence>MGIQIIGQIERINGKELSYGDFAERYLAKNQPVVISDLTEDWRAREDWVSENGNPNLHVFATHFGKSRVQVADCDTREFTDQKRLEMSVTEFVEQWTNKDSIEESVLYLKDWHFVKEYPDYTAYQTPPLFSDDWLNVYLDNYQMHEDRDSFQKYDQISCSDYRFVYMGGKGSWTPLHADVFRSYSWSANVCGKKRWLFLPPPQSHLVYDRYMKNCVYDIFEEVNETKFPGFKKTTWLECIQEPGEIIFVPSGWHHQVYNLEDTISINHNWLNAYNLSWVWDLLWKDYKDTEESIEDIRDICDDFEAICQRNLAANTGMNLNDFFLFMSRFSLGNMVLLQSYSDKHKNLNSCSLAMAQNLLMNLSTILKVMMKMISAGGVTAEEVYLDLRETLEDPQFLRFVRDMGRTYARIHMEEEDQFLSSKELLQKLSGLAGPNMQICSPKDLVEMINHHNTFSSQIYFI</sequence>
<name>JMJ20_ARATH</name>
<dbReference type="EC" id="1.14.11.-" evidence="4"/>
<dbReference type="EMBL" id="AB008265">
    <property type="protein sequence ID" value="BAB10550.1"/>
    <property type="status" value="ALT_SEQ"/>
    <property type="molecule type" value="Genomic_DNA"/>
</dbReference>
<dbReference type="EMBL" id="CP002688">
    <property type="protein sequence ID" value="AED97697.1"/>
    <property type="molecule type" value="Genomic_DNA"/>
</dbReference>
<dbReference type="EMBL" id="AK175825">
    <property type="protein sequence ID" value="BAD43588.1"/>
    <property type="molecule type" value="mRNA"/>
</dbReference>
<dbReference type="EMBL" id="AK176202">
    <property type="protein sequence ID" value="BAD43965.1"/>
    <property type="molecule type" value="mRNA"/>
</dbReference>
<dbReference type="EMBL" id="BT023460">
    <property type="protein sequence ID" value="AAY56451.1"/>
    <property type="molecule type" value="mRNA"/>
</dbReference>
<dbReference type="RefSeq" id="NP_201113.2">
    <property type="nucleotide sequence ID" value="NM_125702.4"/>
</dbReference>
<dbReference type="SMR" id="Q67ZB6"/>
<dbReference type="FunCoup" id="Q67ZB6">
    <property type="interactions" value="3797"/>
</dbReference>
<dbReference type="STRING" id="3702.Q67ZB6"/>
<dbReference type="PaxDb" id="3702-AT5G63080.1"/>
<dbReference type="ProteomicsDB" id="180951"/>
<dbReference type="EnsemblPlants" id="AT5G63080.1">
    <property type="protein sequence ID" value="AT5G63080.1"/>
    <property type="gene ID" value="AT5G63080"/>
</dbReference>
<dbReference type="GeneID" id="836428"/>
<dbReference type="Gramene" id="AT5G63080.1">
    <property type="protein sequence ID" value="AT5G63080.1"/>
    <property type="gene ID" value="AT5G63080"/>
</dbReference>
<dbReference type="KEGG" id="ath:AT5G63080"/>
<dbReference type="Araport" id="AT5G63080"/>
<dbReference type="TAIR" id="AT5G63080">
    <property type="gene designation" value="JMJ20"/>
</dbReference>
<dbReference type="eggNOG" id="KOG2131">
    <property type="taxonomic scope" value="Eukaryota"/>
</dbReference>
<dbReference type="HOGENOM" id="CLU_016785_2_1_1"/>
<dbReference type="InParanoid" id="Q67ZB6"/>
<dbReference type="OMA" id="HPCMFSR"/>
<dbReference type="PRO" id="PR:Q67ZB6"/>
<dbReference type="Proteomes" id="UP000006548">
    <property type="component" value="Chromosome 5"/>
</dbReference>
<dbReference type="ExpressionAtlas" id="Q67ZB6">
    <property type="expression patterns" value="baseline and differential"/>
</dbReference>
<dbReference type="GO" id="GO:0005634">
    <property type="term" value="C:nucleus"/>
    <property type="evidence" value="ECO:0000314"/>
    <property type="project" value="TAIR"/>
</dbReference>
<dbReference type="GO" id="GO:0000987">
    <property type="term" value="F:cis-regulatory region sequence-specific DNA binding"/>
    <property type="evidence" value="ECO:0000314"/>
    <property type="project" value="TAIR"/>
</dbReference>
<dbReference type="GO" id="GO:0033746">
    <property type="term" value="F:histone H3R2 demethylase activity"/>
    <property type="evidence" value="ECO:0000314"/>
    <property type="project" value="TAIR"/>
</dbReference>
<dbReference type="GO" id="GO:0033749">
    <property type="term" value="F:histone H4R3 demethylase activity"/>
    <property type="evidence" value="ECO:0000314"/>
    <property type="project" value="TAIR"/>
</dbReference>
<dbReference type="GO" id="GO:0046872">
    <property type="term" value="F:metal ion binding"/>
    <property type="evidence" value="ECO:0007669"/>
    <property type="project" value="UniProtKB-KW"/>
</dbReference>
<dbReference type="GO" id="GO:0040029">
    <property type="term" value="P:epigenetic regulation of gene expression"/>
    <property type="evidence" value="ECO:0000314"/>
    <property type="project" value="UniProtKB"/>
</dbReference>
<dbReference type="GO" id="GO:0009740">
    <property type="term" value="P:gibberellic acid mediated signaling pathway"/>
    <property type="evidence" value="ECO:0007669"/>
    <property type="project" value="UniProtKB-KW"/>
</dbReference>
<dbReference type="GO" id="GO:0010476">
    <property type="term" value="P:gibberellin mediated signaling pathway"/>
    <property type="evidence" value="ECO:0000315"/>
    <property type="project" value="UniProtKB"/>
</dbReference>
<dbReference type="GO" id="GO:0010030">
    <property type="term" value="P:positive regulation of seed germination"/>
    <property type="evidence" value="ECO:0000315"/>
    <property type="project" value="UniProtKB"/>
</dbReference>
<dbReference type="GO" id="GO:0010099">
    <property type="term" value="P:regulation of photomorphogenesis"/>
    <property type="evidence" value="ECO:0000315"/>
    <property type="project" value="UniProtKB"/>
</dbReference>
<dbReference type="GO" id="GO:0010114">
    <property type="term" value="P:response to red light"/>
    <property type="evidence" value="ECO:0000315"/>
    <property type="project" value="UniProtKB"/>
</dbReference>
<dbReference type="FunFam" id="2.60.120.650:FF:000030">
    <property type="entry name" value="JmjC domain-containing protein 4"/>
    <property type="match status" value="1"/>
</dbReference>
<dbReference type="Gene3D" id="2.60.120.650">
    <property type="entry name" value="Cupin"/>
    <property type="match status" value="1"/>
</dbReference>
<dbReference type="InterPro" id="IPR041667">
    <property type="entry name" value="Cupin_8"/>
</dbReference>
<dbReference type="InterPro" id="IPR003347">
    <property type="entry name" value="JmjC_dom"/>
</dbReference>
<dbReference type="InterPro" id="IPR050910">
    <property type="entry name" value="JMJD6_ArgDemeth/LysHydrox"/>
</dbReference>
<dbReference type="PANTHER" id="PTHR12480:SF6">
    <property type="entry name" value="2-OXOGLUTARATE AND IRON-DEPENDENT OXYGENASE JMJD4"/>
    <property type="match status" value="1"/>
</dbReference>
<dbReference type="PANTHER" id="PTHR12480">
    <property type="entry name" value="ARGININE DEMETHYLASE AND LYSYL-HYDROXYLASE JMJD"/>
    <property type="match status" value="1"/>
</dbReference>
<dbReference type="Pfam" id="PF13621">
    <property type="entry name" value="Cupin_8"/>
    <property type="match status" value="1"/>
</dbReference>
<dbReference type="SMART" id="SM00558">
    <property type="entry name" value="JmjC"/>
    <property type="match status" value="1"/>
</dbReference>
<dbReference type="SUPFAM" id="SSF51197">
    <property type="entry name" value="Clavaminate synthase-like"/>
    <property type="match status" value="1"/>
</dbReference>
<dbReference type="PROSITE" id="PS51184">
    <property type="entry name" value="JMJC"/>
    <property type="match status" value="1"/>
</dbReference>
<proteinExistence type="evidence at protein level"/>
<reference key="1">
    <citation type="journal article" date="1997" name="DNA Res.">
        <title>Structural analysis of Arabidopsis thaliana chromosome 5. III. Sequence features of the regions of 1,191,918 bp covered by seventeen physically assigned P1 clones.</title>
        <authorList>
            <person name="Nakamura Y."/>
            <person name="Sato S."/>
            <person name="Kaneko T."/>
            <person name="Kotani H."/>
            <person name="Asamizu E."/>
            <person name="Miyajima N."/>
            <person name="Tabata S."/>
        </authorList>
    </citation>
    <scope>NUCLEOTIDE SEQUENCE [LARGE SCALE GENOMIC DNA]</scope>
    <source>
        <strain>cv. Columbia</strain>
    </source>
</reference>
<reference key="2">
    <citation type="journal article" date="2017" name="Plant J.">
        <title>Araport11: a complete reannotation of the Arabidopsis thaliana reference genome.</title>
        <authorList>
            <person name="Cheng C.Y."/>
            <person name="Krishnakumar V."/>
            <person name="Chan A.P."/>
            <person name="Thibaud-Nissen F."/>
            <person name="Schobel S."/>
            <person name="Town C.D."/>
        </authorList>
    </citation>
    <scope>GENOME REANNOTATION</scope>
    <source>
        <strain>cv. Columbia</strain>
    </source>
</reference>
<reference key="3">
    <citation type="submission" date="2004-09" db="EMBL/GenBank/DDBJ databases">
        <title>Large-scale analysis of RIKEN Arabidopsis full-length (RAFL) cDNAs.</title>
        <authorList>
            <person name="Totoki Y."/>
            <person name="Seki M."/>
            <person name="Ishida J."/>
            <person name="Nakajima M."/>
            <person name="Enju A."/>
            <person name="Kamiya A."/>
            <person name="Narusaka M."/>
            <person name="Shin-i T."/>
            <person name="Nakagawa M."/>
            <person name="Sakamoto N."/>
            <person name="Oishi K."/>
            <person name="Kohara Y."/>
            <person name="Kobayashi M."/>
            <person name="Toyoda A."/>
            <person name="Sakaki Y."/>
            <person name="Sakurai T."/>
            <person name="Iida K."/>
            <person name="Akiyama K."/>
            <person name="Satou M."/>
            <person name="Toyoda T."/>
            <person name="Konagaya A."/>
            <person name="Carninci P."/>
            <person name="Kawai J."/>
            <person name="Hayashizaki Y."/>
            <person name="Shinozaki K."/>
        </authorList>
    </citation>
    <scope>NUCLEOTIDE SEQUENCE [LARGE SCALE MRNA]</scope>
    <source>
        <strain>cv. Columbia</strain>
    </source>
</reference>
<reference key="4">
    <citation type="submission" date="2005-05" db="EMBL/GenBank/DDBJ databases">
        <title>Arabidopsis ORF clones.</title>
        <authorList>
            <person name="Cheuk R.F."/>
            <person name="Chen H."/>
            <person name="Kim C.J."/>
            <person name="Shinn P."/>
            <person name="Ecker J.R."/>
        </authorList>
    </citation>
    <scope>NUCLEOTIDE SEQUENCE [LARGE SCALE MRNA]</scope>
</reference>
<reference key="5">
    <citation type="journal article" date="2008" name="J. Integr. Plant Biol.">
        <title>Comparative analysis of JmjC domain-containing proteins reveals the potential histone demethylases in Arabidopsis and rice.</title>
        <authorList>
            <person name="Lu F."/>
            <person name="Li G."/>
            <person name="Cui X."/>
            <person name="Liu C."/>
            <person name="Wang X.-J."/>
            <person name="Cao X."/>
        </authorList>
    </citation>
    <scope>GENE FAMILY</scope>
    <scope>NOMENCLATURE</scope>
    <scope>TISSUE SPECIFICITY</scope>
</reference>
<reference key="6">
    <citation type="journal article" date="2012" name="Dev. Cell">
        <title>Control of seed germination by light-induced histone arginine demethylation activity.</title>
        <authorList>
            <person name="Cho J.-N."/>
            <person name="Ryu J.-Y."/>
            <person name="Jeong Y.-M."/>
            <person name="Park J."/>
            <person name="Song J.-J."/>
            <person name="Amasino R.M."/>
            <person name="Noh B."/>
            <person name="Noh Y.-S."/>
        </authorList>
    </citation>
    <scope>FUNCTION</scope>
    <scope>DISRUPTION PHENOTYPE</scope>
    <scope>CATALYTIC ACTIVITY</scope>
    <scope>INDUCTION BY RED LIGHT</scope>
    <scope>SUBCELLULAR LOCATION</scope>
    <scope>DEVELOPMENTAL STAGE</scope>
    <source>
        <strain>cv. Columbia</strain>
    </source>
</reference>
<evidence type="ECO:0000250" key="1">
    <source>
        <dbReference type="UniProtKB" id="Q8GUI6"/>
    </source>
</evidence>
<evidence type="ECO:0000255" key="2">
    <source>
        <dbReference type="PROSITE-ProRule" id="PRU00538"/>
    </source>
</evidence>
<evidence type="ECO:0000269" key="3">
    <source>
    </source>
</evidence>
<evidence type="ECO:0000269" key="4">
    <source>
    </source>
</evidence>
<evidence type="ECO:0000303" key="5">
    <source>
    </source>
</evidence>
<evidence type="ECO:0000305" key="6"/>
<evidence type="ECO:0000312" key="7">
    <source>
        <dbReference type="Araport" id="AT5G63080"/>
    </source>
</evidence>
<evidence type="ECO:0000312" key="8">
    <source>
        <dbReference type="EMBL" id="BAB10550.1"/>
    </source>
</evidence>
<keyword id="KW-0939">Gibberellin signaling pathway</keyword>
<keyword id="KW-0408">Iron</keyword>
<keyword id="KW-0479">Metal-binding</keyword>
<keyword id="KW-0539">Nucleus</keyword>
<keyword id="KW-0560">Oxidoreductase</keyword>
<keyword id="KW-1185">Reference proteome</keyword>
<accession>Q67ZB6</accession>
<accession>Q680P2</accession>
<accession>Q9FML5</accession>
<gene>
    <name evidence="5" type="primary">JMJ20</name>
    <name evidence="7" type="ordered locus">At5g63080</name>
    <name evidence="8" type="ORF">MDC12.4</name>
</gene>